<sequence length="72" mass="8250">MAKEDNIEMQGTVLETLPNTMFRVELENGHVVTAHISGKMRKNYIRILTGDKVTVELTPYDLSKGRIVFRSR</sequence>
<protein>
    <recommendedName>
        <fullName evidence="1">Translation initiation factor IF-1</fullName>
    </recommendedName>
</protein>
<gene>
    <name evidence="1" type="primary">infA</name>
    <name type="ordered locus">EcHS_A0988</name>
</gene>
<dbReference type="EMBL" id="CP000802">
    <property type="protein sequence ID" value="ABV05341.1"/>
    <property type="molecule type" value="Genomic_DNA"/>
</dbReference>
<dbReference type="RefSeq" id="WP_001040187.1">
    <property type="nucleotide sequence ID" value="NC_009800.1"/>
</dbReference>
<dbReference type="SMR" id="A7ZYI7"/>
<dbReference type="GeneID" id="93776536"/>
<dbReference type="KEGG" id="ecx:EcHS_A0988"/>
<dbReference type="HOGENOM" id="CLU_151267_1_0_6"/>
<dbReference type="GO" id="GO:0005829">
    <property type="term" value="C:cytosol"/>
    <property type="evidence" value="ECO:0007669"/>
    <property type="project" value="TreeGrafter"/>
</dbReference>
<dbReference type="GO" id="GO:0043022">
    <property type="term" value="F:ribosome binding"/>
    <property type="evidence" value="ECO:0007669"/>
    <property type="project" value="UniProtKB-UniRule"/>
</dbReference>
<dbReference type="GO" id="GO:0019843">
    <property type="term" value="F:rRNA binding"/>
    <property type="evidence" value="ECO:0007669"/>
    <property type="project" value="UniProtKB-UniRule"/>
</dbReference>
<dbReference type="GO" id="GO:0003743">
    <property type="term" value="F:translation initiation factor activity"/>
    <property type="evidence" value="ECO:0007669"/>
    <property type="project" value="UniProtKB-UniRule"/>
</dbReference>
<dbReference type="CDD" id="cd04451">
    <property type="entry name" value="S1_IF1"/>
    <property type="match status" value="1"/>
</dbReference>
<dbReference type="FunFam" id="2.40.50.140:FF:000002">
    <property type="entry name" value="Translation initiation factor IF-1"/>
    <property type="match status" value="1"/>
</dbReference>
<dbReference type="Gene3D" id="2.40.50.140">
    <property type="entry name" value="Nucleic acid-binding proteins"/>
    <property type="match status" value="1"/>
</dbReference>
<dbReference type="HAMAP" id="MF_00075">
    <property type="entry name" value="IF_1"/>
    <property type="match status" value="1"/>
</dbReference>
<dbReference type="InterPro" id="IPR012340">
    <property type="entry name" value="NA-bd_OB-fold"/>
</dbReference>
<dbReference type="InterPro" id="IPR006196">
    <property type="entry name" value="RNA-binding_domain_S1_IF1"/>
</dbReference>
<dbReference type="InterPro" id="IPR003029">
    <property type="entry name" value="S1_domain"/>
</dbReference>
<dbReference type="InterPro" id="IPR004368">
    <property type="entry name" value="TIF_IF1"/>
</dbReference>
<dbReference type="NCBIfam" id="TIGR00008">
    <property type="entry name" value="infA"/>
    <property type="match status" value="1"/>
</dbReference>
<dbReference type="PANTHER" id="PTHR33370">
    <property type="entry name" value="TRANSLATION INITIATION FACTOR IF-1, CHLOROPLASTIC"/>
    <property type="match status" value="1"/>
</dbReference>
<dbReference type="PANTHER" id="PTHR33370:SF1">
    <property type="entry name" value="TRANSLATION INITIATION FACTOR IF-1, CHLOROPLASTIC"/>
    <property type="match status" value="1"/>
</dbReference>
<dbReference type="Pfam" id="PF01176">
    <property type="entry name" value="eIF-1a"/>
    <property type="match status" value="1"/>
</dbReference>
<dbReference type="SMART" id="SM00316">
    <property type="entry name" value="S1"/>
    <property type="match status" value="1"/>
</dbReference>
<dbReference type="SUPFAM" id="SSF50249">
    <property type="entry name" value="Nucleic acid-binding proteins"/>
    <property type="match status" value="1"/>
</dbReference>
<dbReference type="PROSITE" id="PS50832">
    <property type="entry name" value="S1_IF1_TYPE"/>
    <property type="match status" value="1"/>
</dbReference>
<organism>
    <name type="scientific">Escherichia coli O9:H4 (strain HS)</name>
    <dbReference type="NCBI Taxonomy" id="331112"/>
    <lineage>
        <taxon>Bacteria</taxon>
        <taxon>Pseudomonadati</taxon>
        <taxon>Pseudomonadota</taxon>
        <taxon>Gammaproteobacteria</taxon>
        <taxon>Enterobacterales</taxon>
        <taxon>Enterobacteriaceae</taxon>
        <taxon>Escherichia</taxon>
    </lineage>
</organism>
<feature type="chain" id="PRO_0000338823" description="Translation initiation factor IF-1">
    <location>
        <begin position="1"/>
        <end position="72"/>
    </location>
</feature>
<feature type="domain" description="S1-like" evidence="1">
    <location>
        <begin position="1"/>
        <end position="72"/>
    </location>
</feature>
<accession>A7ZYI7</accession>
<name>IF1_ECOHS</name>
<evidence type="ECO:0000255" key="1">
    <source>
        <dbReference type="HAMAP-Rule" id="MF_00075"/>
    </source>
</evidence>
<keyword id="KW-0963">Cytoplasm</keyword>
<keyword id="KW-0396">Initiation factor</keyword>
<keyword id="KW-0648">Protein biosynthesis</keyword>
<keyword id="KW-0694">RNA-binding</keyword>
<keyword id="KW-0699">rRNA-binding</keyword>
<proteinExistence type="inferred from homology"/>
<comment type="function">
    <text evidence="1">One of the essential components for the initiation of protein synthesis. Stabilizes the binding of IF-2 and IF-3 on the 30S subunit to which N-formylmethionyl-tRNA(fMet) subsequently binds. Helps modulate mRNA selection, yielding the 30S pre-initiation complex (PIC). Upon addition of the 50S ribosomal subunit IF-1, IF-2 and IF-3 are released leaving the mature 70S translation initiation complex.</text>
</comment>
<comment type="subunit">
    <text evidence="1">Component of the 30S ribosomal translation pre-initiation complex which assembles on the 30S ribosome in the order IF-2 and IF-3, IF-1 and N-formylmethionyl-tRNA(fMet); mRNA recruitment can occur at any time during PIC assembly.</text>
</comment>
<comment type="subcellular location">
    <subcellularLocation>
        <location evidence="1">Cytoplasm</location>
    </subcellularLocation>
</comment>
<comment type="similarity">
    <text evidence="1">Belongs to the IF-1 family.</text>
</comment>
<reference key="1">
    <citation type="journal article" date="2008" name="J. Bacteriol.">
        <title>The pangenome structure of Escherichia coli: comparative genomic analysis of E. coli commensal and pathogenic isolates.</title>
        <authorList>
            <person name="Rasko D.A."/>
            <person name="Rosovitz M.J."/>
            <person name="Myers G.S.A."/>
            <person name="Mongodin E.F."/>
            <person name="Fricke W.F."/>
            <person name="Gajer P."/>
            <person name="Crabtree J."/>
            <person name="Sebaihia M."/>
            <person name="Thomson N.R."/>
            <person name="Chaudhuri R."/>
            <person name="Henderson I.R."/>
            <person name="Sperandio V."/>
            <person name="Ravel J."/>
        </authorList>
    </citation>
    <scope>NUCLEOTIDE SEQUENCE [LARGE SCALE GENOMIC DNA]</scope>
    <source>
        <strain>HS</strain>
    </source>
</reference>